<evidence type="ECO:0000255" key="1">
    <source>
        <dbReference type="HAMAP-Rule" id="MF_01346"/>
    </source>
</evidence>
<proteinExistence type="inferred from homology"/>
<dbReference type="EC" id="7.1.2.2" evidence="1"/>
<dbReference type="EMBL" id="CP001191">
    <property type="protein sequence ID" value="ACI56917.1"/>
    <property type="molecule type" value="Genomic_DNA"/>
</dbReference>
<dbReference type="RefSeq" id="WP_003589851.1">
    <property type="nucleotide sequence ID" value="NC_011369.1"/>
</dbReference>
<dbReference type="SMR" id="B5ZSN9"/>
<dbReference type="STRING" id="395492.Rleg2_3654"/>
<dbReference type="GeneID" id="67485353"/>
<dbReference type="KEGG" id="rlt:Rleg2_3654"/>
<dbReference type="eggNOG" id="COG0056">
    <property type="taxonomic scope" value="Bacteria"/>
</dbReference>
<dbReference type="HOGENOM" id="CLU_010091_2_1_5"/>
<dbReference type="Proteomes" id="UP000008330">
    <property type="component" value="Chromosome"/>
</dbReference>
<dbReference type="GO" id="GO:0005886">
    <property type="term" value="C:plasma membrane"/>
    <property type="evidence" value="ECO:0007669"/>
    <property type="project" value="UniProtKB-SubCell"/>
</dbReference>
<dbReference type="GO" id="GO:0045259">
    <property type="term" value="C:proton-transporting ATP synthase complex"/>
    <property type="evidence" value="ECO:0007669"/>
    <property type="project" value="UniProtKB-KW"/>
</dbReference>
<dbReference type="GO" id="GO:0043531">
    <property type="term" value="F:ADP binding"/>
    <property type="evidence" value="ECO:0007669"/>
    <property type="project" value="TreeGrafter"/>
</dbReference>
<dbReference type="GO" id="GO:0005524">
    <property type="term" value="F:ATP binding"/>
    <property type="evidence" value="ECO:0007669"/>
    <property type="project" value="UniProtKB-UniRule"/>
</dbReference>
<dbReference type="GO" id="GO:0046933">
    <property type="term" value="F:proton-transporting ATP synthase activity, rotational mechanism"/>
    <property type="evidence" value="ECO:0007669"/>
    <property type="project" value="UniProtKB-UniRule"/>
</dbReference>
<dbReference type="CDD" id="cd18113">
    <property type="entry name" value="ATP-synt_F1_alpha_C"/>
    <property type="match status" value="1"/>
</dbReference>
<dbReference type="CDD" id="cd18116">
    <property type="entry name" value="ATP-synt_F1_alpha_N"/>
    <property type="match status" value="1"/>
</dbReference>
<dbReference type="CDD" id="cd01132">
    <property type="entry name" value="F1-ATPase_alpha_CD"/>
    <property type="match status" value="1"/>
</dbReference>
<dbReference type="FunFam" id="1.20.150.20:FF:000001">
    <property type="entry name" value="ATP synthase subunit alpha"/>
    <property type="match status" value="1"/>
</dbReference>
<dbReference type="FunFam" id="2.40.30.20:FF:000001">
    <property type="entry name" value="ATP synthase subunit alpha"/>
    <property type="match status" value="1"/>
</dbReference>
<dbReference type="FunFam" id="3.40.50.300:FF:002432">
    <property type="entry name" value="ATP synthase subunit alpha, mitochondrial"/>
    <property type="match status" value="1"/>
</dbReference>
<dbReference type="Gene3D" id="2.40.30.20">
    <property type="match status" value="1"/>
</dbReference>
<dbReference type="Gene3D" id="1.20.150.20">
    <property type="entry name" value="ATP synthase alpha/beta chain, C-terminal domain"/>
    <property type="match status" value="1"/>
</dbReference>
<dbReference type="Gene3D" id="3.40.50.300">
    <property type="entry name" value="P-loop containing nucleotide triphosphate hydrolases"/>
    <property type="match status" value="1"/>
</dbReference>
<dbReference type="HAMAP" id="MF_01346">
    <property type="entry name" value="ATP_synth_alpha_bact"/>
    <property type="match status" value="1"/>
</dbReference>
<dbReference type="InterPro" id="IPR023366">
    <property type="entry name" value="ATP_synth_asu-like_sf"/>
</dbReference>
<dbReference type="InterPro" id="IPR000793">
    <property type="entry name" value="ATP_synth_asu_C"/>
</dbReference>
<dbReference type="InterPro" id="IPR038376">
    <property type="entry name" value="ATP_synth_asu_C_sf"/>
</dbReference>
<dbReference type="InterPro" id="IPR033732">
    <property type="entry name" value="ATP_synth_F1_a_nt-bd_dom"/>
</dbReference>
<dbReference type="InterPro" id="IPR005294">
    <property type="entry name" value="ATP_synth_F1_asu"/>
</dbReference>
<dbReference type="InterPro" id="IPR020003">
    <property type="entry name" value="ATPase_a/bsu_AS"/>
</dbReference>
<dbReference type="InterPro" id="IPR004100">
    <property type="entry name" value="ATPase_F1/V1/A1_a/bsu_N"/>
</dbReference>
<dbReference type="InterPro" id="IPR036121">
    <property type="entry name" value="ATPase_F1/V1/A1_a/bsu_N_sf"/>
</dbReference>
<dbReference type="InterPro" id="IPR000194">
    <property type="entry name" value="ATPase_F1/V1/A1_a/bsu_nucl-bd"/>
</dbReference>
<dbReference type="InterPro" id="IPR027417">
    <property type="entry name" value="P-loop_NTPase"/>
</dbReference>
<dbReference type="NCBIfam" id="TIGR00962">
    <property type="entry name" value="atpA"/>
    <property type="match status" value="1"/>
</dbReference>
<dbReference type="NCBIfam" id="NF009884">
    <property type="entry name" value="PRK13343.1"/>
    <property type="match status" value="1"/>
</dbReference>
<dbReference type="PANTHER" id="PTHR48082">
    <property type="entry name" value="ATP SYNTHASE SUBUNIT ALPHA, MITOCHONDRIAL"/>
    <property type="match status" value="1"/>
</dbReference>
<dbReference type="PANTHER" id="PTHR48082:SF2">
    <property type="entry name" value="ATP SYNTHASE SUBUNIT ALPHA, MITOCHONDRIAL"/>
    <property type="match status" value="1"/>
</dbReference>
<dbReference type="Pfam" id="PF00006">
    <property type="entry name" value="ATP-synt_ab"/>
    <property type="match status" value="1"/>
</dbReference>
<dbReference type="Pfam" id="PF00306">
    <property type="entry name" value="ATP-synt_ab_C"/>
    <property type="match status" value="1"/>
</dbReference>
<dbReference type="Pfam" id="PF02874">
    <property type="entry name" value="ATP-synt_ab_N"/>
    <property type="match status" value="1"/>
</dbReference>
<dbReference type="PIRSF" id="PIRSF039088">
    <property type="entry name" value="F_ATPase_subunit_alpha"/>
    <property type="match status" value="1"/>
</dbReference>
<dbReference type="SUPFAM" id="SSF47917">
    <property type="entry name" value="C-terminal domain of alpha and beta subunits of F1 ATP synthase"/>
    <property type="match status" value="1"/>
</dbReference>
<dbReference type="SUPFAM" id="SSF50615">
    <property type="entry name" value="N-terminal domain of alpha and beta subunits of F1 ATP synthase"/>
    <property type="match status" value="1"/>
</dbReference>
<dbReference type="SUPFAM" id="SSF52540">
    <property type="entry name" value="P-loop containing nucleoside triphosphate hydrolases"/>
    <property type="match status" value="1"/>
</dbReference>
<dbReference type="PROSITE" id="PS00152">
    <property type="entry name" value="ATPASE_ALPHA_BETA"/>
    <property type="match status" value="1"/>
</dbReference>
<accession>B5ZSN9</accession>
<reference key="1">
    <citation type="journal article" date="2010" name="Stand. Genomic Sci.">
        <title>Complete genome sequence of Rhizobium leguminosarum bv trifolii strain WSM2304, an effective microsymbiont of the South American clover Trifolium polymorphum.</title>
        <authorList>
            <person name="Reeve W."/>
            <person name="O'Hara G."/>
            <person name="Chain P."/>
            <person name="Ardley J."/>
            <person name="Brau L."/>
            <person name="Nandesena K."/>
            <person name="Tiwari R."/>
            <person name="Malfatti S."/>
            <person name="Kiss H."/>
            <person name="Lapidus A."/>
            <person name="Copeland A."/>
            <person name="Nolan M."/>
            <person name="Land M."/>
            <person name="Ivanova N."/>
            <person name="Mavromatis K."/>
            <person name="Markowitz V."/>
            <person name="Kyrpides N."/>
            <person name="Melino V."/>
            <person name="Denton M."/>
            <person name="Yates R."/>
            <person name="Howieson J."/>
        </authorList>
    </citation>
    <scope>NUCLEOTIDE SEQUENCE [LARGE SCALE GENOMIC DNA]</scope>
    <source>
        <strain>WSM2304</strain>
    </source>
</reference>
<sequence>MDIRAAEISAILKDQIKNFGKEAEVSEVGQVLSVGDGIARVYGLDNVQAGEMVEFPGGIRGMALNLESDNVGVVIFGSDRDIKEGDTVKRTGAIVDVPVGPELLGRVVDALGNPIDGKGPINATRRSRVDVKAPGIIPRKSVHEPMSTGLKAIDALIPVGRGQRELVIGDRQTGKTAILLDAFLNQKAIHDNGPEGEKLYCVYVAVGQKRSTVAQFVKVLEERGALKYSIIVAATASDPAPMQFLAPFAGCAMGEYFRDNGMHALIGYDDLSKQAVSYRQMSLLLRRPPGREAYPGDVFYLHSRLLERAAKMNDDKGAGSLTALPVIETQGNDVSAFIPTNVISITDGQIFLETDLFYQGIRPAVNVGLSVSRVGSSAQIKAMKQVAGSIKGELAQYREMAAFAQFGSDLDAATQRLLNRGARLTELLKQPQFSPLKTEEQVAVIFAGVNGYLDKLPVASVGKFEQGFLSYLRSEGSAILDAIRTEKAISDDTKGKLTAALDSFAKSFS</sequence>
<name>ATPA_RHILW</name>
<keyword id="KW-0066">ATP synthesis</keyword>
<keyword id="KW-0067">ATP-binding</keyword>
<keyword id="KW-0997">Cell inner membrane</keyword>
<keyword id="KW-1003">Cell membrane</keyword>
<keyword id="KW-0139">CF(1)</keyword>
<keyword id="KW-0375">Hydrogen ion transport</keyword>
<keyword id="KW-0406">Ion transport</keyword>
<keyword id="KW-0472">Membrane</keyword>
<keyword id="KW-0547">Nucleotide-binding</keyword>
<keyword id="KW-1185">Reference proteome</keyword>
<keyword id="KW-1278">Translocase</keyword>
<keyword id="KW-0813">Transport</keyword>
<comment type="function">
    <text evidence="1">Produces ATP from ADP in the presence of a proton gradient across the membrane. The alpha chain is a regulatory subunit.</text>
</comment>
<comment type="catalytic activity">
    <reaction evidence="1">
        <text>ATP + H2O + 4 H(+)(in) = ADP + phosphate + 5 H(+)(out)</text>
        <dbReference type="Rhea" id="RHEA:57720"/>
        <dbReference type="ChEBI" id="CHEBI:15377"/>
        <dbReference type="ChEBI" id="CHEBI:15378"/>
        <dbReference type="ChEBI" id="CHEBI:30616"/>
        <dbReference type="ChEBI" id="CHEBI:43474"/>
        <dbReference type="ChEBI" id="CHEBI:456216"/>
        <dbReference type="EC" id="7.1.2.2"/>
    </reaction>
</comment>
<comment type="subunit">
    <text evidence="1">F-type ATPases have 2 components, CF(1) - the catalytic core - and CF(0) - the membrane proton channel. CF(1) has five subunits: alpha(3), beta(3), gamma(1), delta(1), epsilon(1). CF(0) has three main subunits: a(1), b(2) and c(9-12). The alpha and beta chains form an alternating ring which encloses part of the gamma chain. CF(1) is attached to CF(0) by a central stalk formed by the gamma and epsilon chains, while a peripheral stalk is formed by the delta and b chains.</text>
</comment>
<comment type="subcellular location">
    <subcellularLocation>
        <location evidence="1">Cell inner membrane</location>
        <topology evidence="1">Peripheral membrane protein</topology>
    </subcellularLocation>
</comment>
<comment type="similarity">
    <text evidence="1">Belongs to the ATPase alpha/beta chains family.</text>
</comment>
<organism>
    <name type="scientific">Rhizobium leguminosarum bv. trifolii (strain WSM2304)</name>
    <dbReference type="NCBI Taxonomy" id="395492"/>
    <lineage>
        <taxon>Bacteria</taxon>
        <taxon>Pseudomonadati</taxon>
        <taxon>Pseudomonadota</taxon>
        <taxon>Alphaproteobacteria</taxon>
        <taxon>Hyphomicrobiales</taxon>
        <taxon>Rhizobiaceae</taxon>
        <taxon>Rhizobium/Agrobacterium group</taxon>
        <taxon>Rhizobium</taxon>
    </lineage>
</organism>
<gene>
    <name evidence="1" type="primary">atpA</name>
    <name type="ordered locus">Rleg2_3654</name>
</gene>
<protein>
    <recommendedName>
        <fullName evidence="1">ATP synthase subunit alpha</fullName>
        <ecNumber evidence="1">7.1.2.2</ecNumber>
    </recommendedName>
    <alternativeName>
        <fullName evidence="1">ATP synthase F1 sector subunit alpha</fullName>
    </alternativeName>
    <alternativeName>
        <fullName evidence="1">F-ATPase subunit alpha</fullName>
    </alternativeName>
</protein>
<feature type="chain" id="PRO_1000143427" description="ATP synthase subunit alpha">
    <location>
        <begin position="1"/>
        <end position="509"/>
    </location>
</feature>
<feature type="binding site" evidence="1">
    <location>
        <begin position="169"/>
        <end position="176"/>
    </location>
    <ligand>
        <name>ATP</name>
        <dbReference type="ChEBI" id="CHEBI:30616"/>
    </ligand>
</feature>
<feature type="site" description="Required for activity" evidence="1">
    <location>
        <position position="370"/>
    </location>
</feature>